<sequence length="910" mass="97965">MNFQAGGGQSPQQQQSLAAPGGGGAAAQQLVCGGQFGGAGPGAGGGGPSQQLAGGPPQQFALSNSAAIRAEIQRFESVHPNIYAIYDLIERIEDLALQNQIREHVISIEDSFVNSQEWTLSRSVPELKVGIVGNLSSGKSALVHRYLTGTYVQEESPEGGRFKKEIVVDGQSYLLLIRDEGGPPELQFAAWVDAVVFVFSLEDEISFQTVYNYFLRLCSFRNASEVPMVLVGTQDAISAANPRVIDDSRARKLSTDLKRCTYYETCATYGLNVERVFQDVAQKVVALRKKQQLAIGPCKSLPNSPSHSAVSAASIPAVHINQATNGGSSAFSDYSSSVPSTPSISQRELRIETIAASSTPTPIRKQSKRRSNIFTSRKGADLDREKKAAECRVDSIGSGRAIPIKQGILLKRSGKSLNKEWKKKYVTLCDNGLLTYHPSLHDYMQNIHGKEIDLLRTTVKVPGKRLPRATPTTAPGTSPRANGLAMERSNTQLGGATGAPHSASSTSLHSERPHSSAWAGSRPGPEGLHQRSCSVSSTDQWSEAAALPASMQHPASGPAESLSSSPKLEPPPSPHSNRKKHRGKKSTGTPRPDGPSSAAEEAEESFEFVVVSLTGQTWHFEASTAEERELWVQSVQAQILASLQGCRSAKDKTRLGNQNTALAVQAVRTVRGNSLCIDCEAPNPDWASLNLGALMCIECSGIHRHLGAHLSRVRSLDLDDWPPELLAVMTAMGNALANSVWEGALDGYSKPGPEACREEKERWIRAKYEQKLFLAPLPSSDVPLGQQLLRAVVEDDLRLLVMLLAHGSKEEVNETYGDGDGRTALHLSSAMANVVFTQLLIWYGVDVRSRDARGLTPLAYARRAGSQECADILIQHGCPGEGCGLAPTPNREPANGTNPSAELHRSPSIL</sequence>
<accession>Q8VHH5</accession>
<accession>Q812F7</accession>
<protein>
    <recommendedName>
        <fullName>Arf-GAP with GTPase, ANK repeat and PH domain-containing protein 3</fullName>
        <shortName>AGAP-3</shortName>
    </recommendedName>
    <alternativeName>
        <fullName>CRAM-associated GTPase</fullName>
        <shortName>CRAG</shortName>
    </alternativeName>
    <alternativeName>
        <fullName>Centaurin-gamma-3</fullName>
        <shortName>Cnt-g3</shortName>
    </alternativeName>
    <alternativeName>
        <fullName>MR1-interacting protein</fullName>
        <shortName>MRIP-1</shortName>
    </alternativeName>
</protein>
<organism>
    <name type="scientific">Mus musculus</name>
    <name type="common">Mouse</name>
    <dbReference type="NCBI Taxonomy" id="10090"/>
    <lineage>
        <taxon>Eukaryota</taxon>
        <taxon>Metazoa</taxon>
        <taxon>Chordata</taxon>
        <taxon>Craniata</taxon>
        <taxon>Vertebrata</taxon>
        <taxon>Euteleostomi</taxon>
        <taxon>Mammalia</taxon>
        <taxon>Eutheria</taxon>
        <taxon>Euarchontoglires</taxon>
        <taxon>Glires</taxon>
        <taxon>Rodentia</taxon>
        <taxon>Myomorpha</taxon>
        <taxon>Muroidea</taxon>
        <taxon>Muridae</taxon>
        <taxon>Murinae</taxon>
        <taxon>Mus</taxon>
        <taxon>Mus</taxon>
    </lineage>
</organism>
<reference key="1">
    <citation type="journal article" date="2006" name="J. Cell Biol.">
        <title>A novel GTPase, CRAG, mediates promyelocytic leukemia protein-associated nuclear body formation and degradation of expanded polyglutamine protein.</title>
        <authorList>
            <person name="Qin Q."/>
            <person name="Inatome R."/>
            <person name="Hotta A."/>
            <person name="Kojima M."/>
            <person name="Yamamura H."/>
            <person name="Hirai H."/>
            <person name="Yoshizawa T."/>
            <person name="Tanaka H."/>
            <person name="Fukami K."/>
            <person name="Yanagi S."/>
        </authorList>
    </citation>
    <scope>NUCLEOTIDE SEQUENCE [MRNA] (ISOFORM 2)</scope>
    <scope>TISSUE SPECIFICITY</scope>
    <scope>DEVELOPMENTAL STAGE</scope>
    <scope>MUTAGENESIS OF SER-140 AND 368-LYS-ARG-369</scope>
    <scope>ACTIVITY REGULATION</scope>
    <scope>FUNCTION</scope>
</reference>
<reference key="2">
    <citation type="submission" date="2001-12" db="EMBL/GenBank/DDBJ databases">
        <title>Characterization of MRIP-1, a novel ADP-ribosylation factor GTPase-activating protein.</title>
        <authorList>
            <person name="Gong L."/>
            <person name="Wu K."/>
        </authorList>
    </citation>
    <scope>NUCLEOTIDE SEQUENCE [MRNA] (ISOFORM 1)</scope>
</reference>
<reference key="3">
    <citation type="journal article" date="2004" name="J. Biol. Chem.">
        <title>AGAP1, a novel binding partner of nitric oxide-sensitive guanylyl cyclase.</title>
        <authorList>
            <person name="Meurer S."/>
            <person name="Pioch S."/>
            <person name="Wagner K."/>
            <person name="Mueller-Esterl W."/>
            <person name="Gross S."/>
        </authorList>
    </citation>
    <scope>TISSUE SPECIFICITY</scope>
</reference>
<reference key="4">
    <citation type="journal article" date="2010" name="Cell">
        <title>A tissue-specific atlas of mouse protein phosphorylation and expression.</title>
        <authorList>
            <person name="Huttlin E.L."/>
            <person name="Jedrychowski M.P."/>
            <person name="Elias J.E."/>
            <person name="Goswami T."/>
            <person name="Rad R."/>
            <person name="Beausoleil S.A."/>
            <person name="Villen J."/>
            <person name="Haas W."/>
            <person name="Sowa M.E."/>
            <person name="Gygi S.P."/>
        </authorList>
    </citation>
    <scope>PHOSPHORYLATION [LARGE SCALE ANALYSIS] AT SER-478</scope>
    <scope>IDENTIFICATION BY MASS SPECTROMETRY [LARGE SCALE ANALYSIS]</scope>
    <source>
        <tissue>Brain</tissue>
        <tissue>Kidney</tissue>
        <tissue>Lung</tissue>
        <tissue>Pancreas</tissue>
        <tissue>Testis</tissue>
    </source>
</reference>
<comment type="function">
    <text evidence="9 11">GTPase-activating protein for the ADP ribosylation factor family (Potential). GTPase which may be involved in the degradation of expanded polyglutamine proteins through the ubiquitin-proteasome pathway.</text>
</comment>
<comment type="activity regulation">
    <text evidence="9">GTPase activity is stimulated by oxidative stress.</text>
</comment>
<comment type="subunit">
    <text evidence="1">Interacts with PML. Interacts with expanded polyglutamine proteins (By similarity).</text>
</comment>
<comment type="subcellular location">
    <subcellularLocation>
        <location>Cytoplasm</location>
    </subcellularLocation>
    <text evidence="1">Upon oxidative stress, translocates to PML nuclear bodies.</text>
</comment>
<comment type="alternative products">
    <event type="alternative splicing"/>
    <isoform>
        <id>Q8VHH5-1</id>
        <name>1</name>
        <sequence type="displayed"/>
    </isoform>
    <isoform>
        <id>Q8VHH5-2</id>
        <name>2</name>
        <sequence type="described" ref="VSP_018543 VSP_018544 VSP_018545"/>
    </isoform>
</comment>
<comment type="tissue specificity">
    <text evidence="8 9">Widely expressed, with highest levels in brain.</text>
</comment>
<comment type="developmental stage">
    <text evidence="9">Highly expressed in the developing brain.</text>
</comment>
<comment type="similarity">
    <text evidence="6 11">Belongs to the centaurin gamma-like family.</text>
</comment>
<proteinExistence type="evidence at protein level"/>
<dbReference type="EMBL" id="AB078345">
    <property type="protein sequence ID" value="BAC55242.1"/>
    <property type="molecule type" value="mRNA"/>
</dbReference>
<dbReference type="EMBL" id="AF459091">
    <property type="protein sequence ID" value="AAL68640.1"/>
    <property type="molecule type" value="mRNA"/>
</dbReference>
<dbReference type="CCDS" id="CCDS19122.1">
    <molecule id="Q8VHH5-1"/>
</dbReference>
<dbReference type="SMR" id="Q8VHH5"/>
<dbReference type="FunCoup" id="Q8VHH5">
    <property type="interactions" value="1179"/>
</dbReference>
<dbReference type="IntAct" id="Q8VHH5">
    <property type="interactions" value="3"/>
</dbReference>
<dbReference type="MINT" id="Q8VHH5"/>
<dbReference type="STRING" id="10090.ENSMUSP00000024123"/>
<dbReference type="GlyGen" id="Q8VHH5">
    <property type="glycosylation" value="3 sites, 1 O-linked glycan (2 sites)"/>
</dbReference>
<dbReference type="iPTMnet" id="Q8VHH5"/>
<dbReference type="PhosphoSitePlus" id="Q8VHH5"/>
<dbReference type="SwissPalm" id="Q8VHH5"/>
<dbReference type="jPOST" id="Q8VHH5"/>
<dbReference type="PaxDb" id="10090-ENSMUSP00000024123"/>
<dbReference type="PeptideAtlas" id="Q8VHH5"/>
<dbReference type="ProteomicsDB" id="296080">
    <molecule id="Q8VHH5-1"/>
</dbReference>
<dbReference type="ProteomicsDB" id="296081">
    <molecule id="Q8VHH5-2"/>
</dbReference>
<dbReference type="Pumba" id="Q8VHH5"/>
<dbReference type="UCSC" id="uc008wru.2">
    <molecule id="Q8VHH5-2"/>
    <property type="organism name" value="mouse"/>
</dbReference>
<dbReference type="AGR" id="MGI:2183446"/>
<dbReference type="MGI" id="MGI:2183446">
    <property type="gene designation" value="Agap3"/>
</dbReference>
<dbReference type="eggNOG" id="KOG0705">
    <property type="taxonomic scope" value="Eukaryota"/>
</dbReference>
<dbReference type="InParanoid" id="Q8VHH5"/>
<dbReference type="PhylomeDB" id="Q8VHH5"/>
<dbReference type="CD-CODE" id="CE726F99">
    <property type="entry name" value="Postsynaptic density"/>
</dbReference>
<dbReference type="ChiTaRS" id="Agap3">
    <property type="organism name" value="mouse"/>
</dbReference>
<dbReference type="PRO" id="PR:Q8VHH5"/>
<dbReference type="Proteomes" id="UP000000589">
    <property type="component" value="Unplaced"/>
</dbReference>
<dbReference type="RNAct" id="Q8VHH5">
    <property type="molecule type" value="protein"/>
</dbReference>
<dbReference type="GO" id="GO:0071944">
    <property type="term" value="C:cell periphery"/>
    <property type="evidence" value="ECO:0000314"/>
    <property type="project" value="MGI"/>
</dbReference>
<dbReference type="GO" id="GO:0005737">
    <property type="term" value="C:cytoplasm"/>
    <property type="evidence" value="ECO:0000314"/>
    <property type="project" value="MGI"/>
</dbReference>
<dbReference type="GO" id="GO:0005634">
    <property type="term" value="C:nucleus"/>
    <property type="evidence" value="ECO:0000314"/>
    <property type="project" value="MGI"/>
</dbReference>
<dbReference type="GO" id="GO:0005525">
    <property type="term" value="F:GTP binding"/>
    <property type="evidence" value="ECO:0007669"/>
    <property type="project" value="UniProtKB-KW"/>
</dbReference>
<dbReference type="GO" id="GO:0005096">
    <property type="term" value="F:GTPase activator activity"/>
    <property type="evidence" value="ECO:0007669"/>
    <property type="project" value="UniProtKB-KW"/>
</dbReference>
<dbReference type="GO" id="GO:0003924">
    <property type="term" value="F:GTPase activity"/>
    <property type="evidence" value="ECO:0000314"/>
    <property type="project" value="MGI"/>
</dbReference>
<dbReference type="GO" id="GO:0031593">
    <property type="term" value="F:polyubiquitin modification-dependent protein binding"/>
    <property type="evidence" value="ECO:0000314"/>
    <property type="project" value="MGI"/>
</dbReference>
<dbReference type="GO" id="GO:0008270">
    <property type="term" value="F:zinc ion binding"/>
    <property type="evidence" value="ECO:0007669"/>
    <property type="project" value="UniProtKB-KW"/>
</dbReference>
<dbReference type="GO" id="GO:0034614">
    <property type="term" value="P:cellular response to reactive oxygen species"/>
    <property type="evidence" value="ECO:0000314"/>
    <property type="project" value="MGI"/>
</dbReference>
<dbReference type="GO" id="GO:0043161">
    <property type="term" value="P:proteasome-mediated ubiquitin-dependent protein catabolic process"/>
    <property type="evidence" value="ECO:0000314"/>
    <property type="project" value="MGI"/>
</dbReference>
<dbReference type="GO" id="GO:0006606">
    <property type="term" value="P:protein import into nucleus"/>
    <property type="evidence" value="ECO:0000315"/>
    <property type="project" value="MGI"/>
</dbReference>
<dbReference type="CDD" id="cd08855">
    <property type="entry name" value="ArfGap_AGAP3"/>
    <property type="match status" value="1"/>
</dbReference>
<dbReference type="CDD" id="cd04103">
    <property type="entry name" value="Centaurin_gamma"/>
    <property type="match status" value="1"/>
</dbReference>
<dbReference type="CDD" id="cd01250">
    <property type="entry name" value="PH_AGAP"/>
    <property type="match status" value="1"/>
</dbReference>
<dbReference type="FunFam" id="1.10.220.150:FF:000001">
    <property type="entry name" value="Arf-GAP with GTPase, ANK repeat and PH domain-containing protein 1"/>
    <property type="match status" value="1"/>
</dbReference>
<dbReference type="FunFam" id="2.30.29.30:FF:000077">
    <property type="entry name" value="Arf-GAP with GTPase, ANK repeat and PH domain-containing protein 1"/>
    <property type="match status" value="1"/>
</dbReference>
<dbReference type="FunFam" id="3.40.50.300:FF:000178">
    <property type="entry name" value="Arf-GAP with GTPase, ANK repeat and PH domain-containing protein 1"/>
    <property type="match status" value="1"/>
</dbReference>
<dbReference type="FunFam" id="1.25.40.20:FF:000038">
    <property type="entry name" value="Arf-GAP with GTPase, ANK repeat and PH domain-containing protein 3"/>
    <property type="match status" value="1"/>
</dbReference>
<dbReference type="FunFam" id="2.30.29.30:FF:000199">
    <property type="entry name" value="Arf-GAP with GTPase, ANK repeat and PH domain-containing protein 3"/>
    <property type="match status" value="1"/>
</dbReference>
<dbReference type="Gene3D" id="1.25.40.20">
    <property type="entry name" value="Ankyrin repeat-containing domain"/>
    <property type="match status" value="1"/>
</dbReference>
<dbReference type="Gene3D" id="1.10.220.150">
    <property type="entry name" value="Arf GTPase activating protein"/>
    <property type="match status" value="1"/>
</dbReference>
<dbReference type="Gene3D" id="3.40.50.300">
    <property type="entry name" value="P-loop containing nucleotide triphosphate hydrolases"/>
    <property type="match status" value="1"/>
</dbReference>
<dbReference type="Gene3D" id="2.30.29.30">
    <property type="entry name" value="Pleckstrin-homology domain (PH domain)/Phosphotyrosine-binding domain (PTB)"/>
    <property type="match status" value="2"/>
</dbReference>
<dbReference type="InterPro" id="IPR002110">
    <property type="entry name" value="Ankyrin_rpt"/>
</dbReference>
<dbReference type="InterPro" id="IPR036770">
    <property type="entry name" value="Ankyrin_rpt-contain_sf"/>
</dbReference>
<dbReference type="InterPro" id="IPR051282">
    <property type="entry name" value="Arf-GAP_GTPase_ANK_PH"/>
</dbReference>
<dbReference type="InterPro" id="IPR037278">
    <property type="entry name" value="ARFGAP/RecO"/>
</dbReference>
<dbReference type="InterPro" id="IPR001164">
    <property type="entry name" value="ArfGAP_dom"/>
</dbReference>
<dbReference type="InterPro" id="IPR038508">
    <property type="entry name" value="ArfGAP_dom_sf"/>
</dbReference>
<dbReference type="InterPro" id="IPR027417">
    <property type="entry name" value="P-loop_NTPase"/>
</dbReference>
<dbReference type="InterPro" id="IPR011993">
    <property type="entry name" value="PH-like_dom_sf"/>
</dbReference>
<dbReference type="InterPro" id="IPR001849">
    <property type="entry name" value="PH_domain"/>
</dbReference>
<dbReference type="InterPro" id="IPR001806">
    <property type="entry name" value="Small_GTPase"/>
</dbReference>
<dbReference type="PANTHER" id="PTHR45819:SF2">
    <property type="entry name" value="ARF-GAP WITH GTPASE, ANK REPEAT AND PH DOMAIN-CONTAINING PROTEIN 3"/>
    <property type="match status" value="1"/>
</dbReference>
<dbReference type="PANTHER" id="PTHR45819">
    <property type="entry name" value="CENTAURIN-GAMMA-1A"/>
    <property type="match status" value="1"/>
</dbReference>
<dbReference type="Pfam" id="PF12796">
    <property type="entry name" value="Ank_2"/>
    <property type="match status" value="1"/>
</dbReference>
<dbReference type="Pfam" id="PF01412">
    <property type="entry name" value="ArfGap"/>
    <property type="match status" value="1"/>
</dbReference>
<dbReference type="Pfam" id="PF00071">
    <property type="entry name" value="Ras"/>
    <property type="match status" value="1"/>
</dbReference>
<dbReference type="PRINTS" id="PR00405">
    <property type="entry name" value="REVINTRACTNG"/>
</dbReference>
<dbReference type="SMART" id="SM00105">
    <property type="entry name" value="ArfGap"/>
    <property type="match status" value="1"/>
</dbReference>
<dbReference type="SMART" id="SM00233">
    <property type="entry name" value="PH"/>
    <property type="match status" value="1"/>
</dbReference>
<dbReference type="SMART" id="SM00175">
    <property type="entry name" value="RAB"/>
    <property type="match status" value="1"/>
</dbReference>
<dbReference type="SMART" id="SM00173">
    <property type="entry name" value="RAS"/>
    <property type="match status" value="1"/>
</dbReference>
<dbReference type="SUPFAM" id="SSF48403">
    <property type="entry name" value="Ankyrin repeat"/>
    <property type="match status" value="1"/>
</dbReference>
<dbReference type="SUPFAM" id="SSF57863">
    <property type="entry name" value="ArfGap/RecO-like zinc finger"/>
    <property type="match status" value="1"/>
</dbReference>
<dbReference type="SUPFAM" id="SSF52540">
    <property type="entry name" value="P-loop containing nucleoside triphosphate hydrolases"/>
    <property type="match status" value="1"/>
</dbReference>
<dbReference type="SUPFAM" id="SSF50729">
    <property type="entry name" value="PH domain-like"/>
    <property type="match status" value="1"/>
</dbReference>
<dbReference type="PROSITE" id="PS50297">
    <property type="entry name" value="ANK_REP_REGION"/>
    <property type="match status" value="1"/>
</dbReference>
<dbReference type="PROSITE" id="PS50088">
    <property type="entry name" value="ANK_REPEAT"/>
    <property type="match status" value="1"/>
</dbReference>
<dbReference type="PROSITE" id="PS50115">
    <property type="entry name" value="ARFGAP"/>
    <property type="match status" value="1"/>
</dbReference>
<dbReference type="PROSITE" id="PS52057">
    <property type="entry name" value="GLD"/>
    <property type="match status" value="1"/>
</dbReference>
<dbReference type="PROSITE" id="PS50003">
    <property type="entry name" value="PH_DOMAIN"/>
    <property type="match status" value="1"/>
</dbReference>
<gene>
    <name type="primary">Agap3</name>
    <name type="synonym">Centg3</name>
</gene>
<evidence type="ECO:0000250" key="1"/>
<evidence type="ECO:0000250" key="2">
    <source>
        <dbReference type="UniProtKB" id="Q96P47"/>
    </source>
</evidence>
<evidence type="ECO:0000255" key="3"/>
<evidence type="ECO:0000255" key="4">
    <source>
        <dbReference type="PROSITE-ProRule" id="PRU00145"/>
    </source>
</evidence>
<evidence type="ECO:0000255" key="5">
    <source>
        <dbReference type="PROSITE-ProRule" id="PRU00288"/>
    </source>
</evidence>
<evidence type="ECO:0000255" key="6">
    <source>
        <dbReference type="PROSITE-ProRule" id="PRU01402"/>
    </source>
</evidence>
<evidence type="ECO:0000256" key="7">
    <source>
        <dbReference type="SAM" id="MobiDB-lite"/>
    </source>
</evidence>
<evidence type="ECO:0000269" key="8">
    <source>
    </source>
</evidence>
<evidence type="ECO:0000269" key="9">
    <source>
    </source>
</evidence>
<evidence type="ECO:0000303" key="10">
    <source>
    </source>
</evidence>
<evidence type="ECO:0000305" key="11"/>
<evidence type="ECO:0007744" key="12">
    <source>
    </source>
</evidence>
<feature type="chain" id="PRO_0000235916" description="Arf-GAP with GTPase, ANK repeat and PH domain-containing protein 3">
    <location>
        <begin position="1"/>
        <end position="910"/>
    </location>
</feature>
<feature type="domain" description="GLD" evidence="6">
    <location>
        <begin position="122"/>
        <end position="296"/>
    </location>
</feature>
<feature type="domain" description="PH" evidence="4">
    <location>
        <begin position="402"/>
        <end position="640"/>
    </location>
</feature>
<feature type="domain" description="Arf-GAP" evidence="5">
    <location>
        <begin position="661"/>
        <end position="781"/>
    </location>
</feature>
<feature type="repeat" description="ANK 1">
    <location>
        <begin position="783"/>
        <end position="812"/>
    </location>
</feature>
<feature type="repeat" description="ANK 2">
    <location>
        <begin position="820"/>
        <end position="849"/>
    </location>
</feature>
<feature type="repeat" description="ANK 3">
    <location>
        <begin position="853"/>
        <end position="882"/>
    </location>
</feature>
<feature type="zinc finger region" description="C4-type" evidence="5">
    <location>
        <begin position="676"/>
        <end position="699"/>
    </location>
</feature>
<feature type="region of interest" description="Disordered" evidence="7">
    <location>
        <begin position="1"/>
        <end position="26"/>
    </location>
</feature>
<feature type="region of interest" description="Small GTPase-like">
    <location>
        <begin position="119"/>
        <end position="410"/>
    </location>
</feature>
<feature type="region of interest" description="Disordered" evidence="7">
    <location>
        <begin position="462"/>
        <end position="603"/>
    </location>
</feature>
<feature type="region of interest" description="Disordered" evidence="7">
    <location>
        <begin position="888"/>
        <end position="910"/>
    </location>
</feature>
<feature type="compositionally biased region" description="Low complexity" evidence="7">
    <location>
        <begin position="10"/>
        <end position="19"/>
    </location>
</feature>
<feature type="compositionally biased region" description="Polar residues" evidence="7">
    <location>
        <begin position="470"/>
        <end position="480"/>
    </location>
</feature>
<feature type="compositionally biased region" description="Polar residues" evidence="7">
    <location>
        <begin position="531"/>
        <end position="541"/>
    </location>
</feature>
<feature type="compositionally biased region" description="Low complexity" evidence="7">
    <location>
        <begin position="558"/>
        <end position="567"/>
    </location>
</feature>
<feature type="compositionally biased region" description="Basic residues" evidence="7">
    <location>
        <begin position="576"/>
        <end position="585"/>
    </location>
</feature>
<feature type="binding site" evidence="3">
    <location>
        <begin position="133"/>
        <end position="140"/>
    </location>
    <ligand>
        <name>GTP</name>
        <dbReference type="ChEBI" id="CHEBI:37565"/>
    </ligand>
</feature>
<feature type="binding site" evidence="3">
    <location>
        <begin position="177"/>
        <end position="181"/>
    </location>
    <ligand>
        <name>GTP</name>
        <dbReference type="ChEBI" id="CHEBI:37565"/>
    </ligand>
</feature>
<feature type="binding site" evidence="3">
    <location>
        <begin position="233"/>
        <end position="236"/>
    </location>
    <ligand>
        <name>GTP</name>
        <dbReference type="ChEBI" id="CHEBI:37565"/>
    </ligand>
</feature>
<feature type="modified residue" description="Phosphothreonine" evidence="2">
    <location>
        <position position="359"/>
    </location>
</feature>
<feature type="modified residue" description="Phosphothreonine" evidence="2">
    <location>
        <position position="361"/>
    </location>
</feature>
<feature type="modified residue" description="Phosphoserine" evidence="12">
    <location>
        <position position="478"/>
    </location>
</feature>
<feature type="modified residue" description="Phosphoserine" evidence="2">
    <location>
        <position position="573"/>
    </location>
</feature>
<feature type="splice variant" id="VSP_018543" description="In isoform 2." evidence="10">
    <original>LAAPGGGGAAAQQLVCGGQFGGAGPGAGG</original>
    <variation>RGC</variation>
    <location>
        <begin position="17"/>
        <end position="45"/>
    </location>
</feature>
<feature type="splice variant" id="VSP_018544" description="In isoform 2." evidence="10">
    <original>SRKGADLDREKKAAECRVDS</original>
    <variation>ICATVSNFSSTKRPFQLLPN</variation>
    <location>
        <begin position="376"/>
        <end position="395"/>
    </location>
</feature>
<feature type="splice variant" id="VSP_018545" description="In isoform 2." evidence="10">
    <location>
        <begin position="396"/>
        <end position="910"/>
    </location>
</feature>
<feature type="mutagenesis site" description="Abolishes interaction with PML." evidence="9">
    <original>S</original>
    <variation>N</variation>
    <location>
        <position position="140"/>
    </location>
</feature>
<feature type="mutagenesis site" description="Abolishes translocation to PML nuclear bodies upon oxidative stress." evidence="9">
    <original>KR</original>
    <variation>EE</variation>
    <location>
        <begin position="368"/>
        <end position="369"/>
    </location>
</feature>
<name>AGAP3_MOUSE</name>
<keyword id="KW-0025">Alternative splicing</keyword>
<keyword id="KW-0040">ANK repeat</keyword>
<keyword id="KW-0963">Cytoplasm</keyword>
<keyword id="KW-0342">GTP-binding</keyword>
<keyword id="KW-0343">GTPase activation</keyword>
<keyword id="KW-0479">Metal-binding</keyword>
<keyword id="KW-0547">Nucleotide-binding</keyword>
<keyword id="KW-0597">Phosphoprotein</keyword>
<keyword id="KW-1185">Reference proteome</keyword>
<keyword id="KW-0677">Repeat</keyword>
<keyword id="KW-0862">Zinc</keyword>
<keyword id="KW-0863">Zinc-finger</keyword>